<organism>
    <name type="scientific">Staphylococcus aureus (strain MW2)</name>
    <dbReference type="NCBI Taxonomy" id="196620"/>
    <lineage>
        <taxon>Bacteria</taxon>
        <taxon>Bacillati</taxon>
        <taxon>Bacillota</taxon>
        <taxon>Bacilli</taxon>
        <taxon>Bacillales</taxon>
        <taxon>Staphylococcaceae</taxon>
        <taxon>Staphylococcus</taxon>
    </lineage>
</organism>
<reference key="1">
    <citation type="journal article" date="2002" name="Lancet">
        <title>Genome and virulence determinants of high virulence community-acquired MRSA.</title>
        <authorList>
            <person name="Baba T."/>
            <person name="Takeuchi F."/>
            <person name="Kuroda M."/>
            <person name="Yuzawa H."/>
            <person name="Aoki K."/>
            <person name="Oguchi A."/>
            <person name="Nagai Y."/>
            <person name="Iwama N."/>
            <person name="Asano K."/>
            <person name="Naimi T."/>
            <person name="Kuroda H."/>
            <person name="Cui L."/>
            <person name="Yamamoto K."/>
            <person name="Hiramatsu K."/>
        </authorList>
    </citation>
    <scope>NUCLEOTIDE SEQUENCE [LARGE SCALE GENOMIC DNA]</scope>
    <source>
        <strain>MW2</strain>
    </source>
</reference>
<proteinExistence type="inferred from homology"/>
<gene>
    <name evidence="1" type="primary">menB</name>
    <name type="ordered locus">MW0929</name>
</gene>
<feature type="chain" id="PRO_0000224819" description="1,4-dihydroxy-2-naphthoyl-CoA synthase">
    <location>
        <begin position="1"/>
        <end position="273"/>
    </location>
</feature>
<feature type="region of interest" description="Disordered" evidence="2">
    <location>
        <begin position="254"/>
        <end position="273"/>
    </location>
</feature>
<feature type="compositionally biased region" description="Basic and acidic residues" evidence="2">
    <location>
        <begin position="254"/>
        <end position="265"/>
    </location>
</feature>
<feature type="binding site" description="in other chain" evidence="1">
    <location>
        <position position="34"/>
    </location>
    <ligand>
        <name>substrate</name>
        <note>ligand shared between two neighboring subunits</note>
    </ligand>
</feature>
<feature type="binding site" description="in other chain" evidence="1">
    <location>
        <begin position="73"/>
        <end position="77"/>
    </location>
    <ligand>
        <name>substrate</name>
        <note>ligand shared between two neighboring subunits</note>
    </ligand>
</feature>
<feature type="binding site" description="in other chain" evidence="1">
    <location>
        <position position="85"/>
    </location>
    <ligand>
        <name>substrate</name>
        <note>ligand shared between two neighboring subunits</note>
    </ligand>
</feature>
<feature type="binding site" description="in other chain" evidence="1">
    <location>
        <begin position="117"/>
        <end position="121"/>
    </location>
    <ligand>
        <name>substrate</name>
        <note>ligand shared between two neighboring subunits</note>
    </ligand>
</feature>
<feature type="binding site" evidence="1">
    <location>
        <begin position="142"/>
        <end position="144"/>
    </location>
    <ligand>
        <name>hydrogencarbonate</name>
        <dbReference type="ChEBI" id="CHEBI:17544"/>
    </ligand>
</feature>
<feature type="binding site" description="in other chain" evidence="1">
    <location>
        <position position="143"/>
    </location>
    <ligand>
        <name>substrate</name>
        <note>ligand shared between two neighboring subunits</note>
    </ligand>
</feature>
<feature type="binding site" description="in other chain" evidence="1">
    <location>
        <position position="149"/>
    </location>
    <ligand>
        <name>substrate</name>
        <note>ligand shared between two neighboring subunits</note>
    </ligand>
</feature>
<feature type="binding site" evidence="1">
    <location>
        <position position="246"/>
    </location>
    <ligand>
        <name>substrate</name>
        <note>ligand shared between two neighboring subunits</note>
    </ligand>
</feature>
<feature type="binding site" evidence="1">
    <location>
        <position position="261"/>
    </location>
    <ligand>
        <name>substrate</name>
        <note>ligand shared between two neighboring subunits</note>
    </ligand>
</feature>
<feature type="site" description="Important for catalysis" evidence="1">
    <location>
        <position position="85"/>
    </location>
</feature>
<feature type="site" description="Important for catalysis" evidence="1">
    <location>
        <position position="246"/>
    </location>
</feature>
<sequence length="273" mass="30442">MTNRQWETLREYDEIKYEFYEGIAKVTINRPEVRNAFTPKTVSEMIDAFSRARDDQNVSVIVLTGEGDLAFCSGGDQKKRGHGGYVGEDQIPRLNVLDLQRLIRIIPKPVIAMVKGYAVGGGNVLNVVCDLTIAADNAIFGQTGPKVGSFDAGYGSGYLARIVGHKKAREIWYLCRQYNAQEALDMGLVNTVVPLEKVEDETVQWCKEIMKHSPTALRFLKAAMNADTDGLAGLQQMAGDATLLYYTTDEAKEGRDAFKEKRDPDFDQFPKFP</sequence>
<evidence type="ECO:0000255" key="1">
    <source>
        <dbReference type="HAMAP-Rule" id="MF_01934"/>
    </source>
</evidence>
<evidence type="ECO:0000256" key="2">
    <source>
        <dbReference type="SAM" id="MobiDB-lite"/>
    </source>
</evidence>
<accession>Q8NXA0</accession>
<comment type="function">
    <text evidence="1">Converts o-succinylbenzoyl-CoA (OSB-CoA) to 1,4-dihydroxy-2-naphthoyl-CoA (DHNA-CoA).</text>
</comment>
<comment type="catalytic activity">
    <reaction evidence="1">
        <text>2-succinylbenzoyl-CoA + H(+) = 1,4-dihydroxy-2-naphthoyl-CoA + H2O</text>
        <dbReference type="Rhea" id="RHEA:26562"/>
        <dbReference type="ChEBI" id="CHEBI:15377"/>
        <dbReference type="ChEBI" id="CHEBI:15378"/>
        <dbReference type="ChEBI" id="CHEBI:57364"/>
        <dbReference type="ChEBI" id="CHEBI:58897"/>
        <dbReference type="EC" id="4.1.3.36"/>
    </reaction>
</comment>
<comment type="cofactor">
    <cofactor evidence="1">
        <name>hydrogencarbonate</name>
        <dbReference type="ChEBI" id="CHEBI:17544"/>
    </cofactor>
</comment>
<comment type="pathway">
    <text evidence="1">Quinol/quinone metabolism; 1,4-dihydroxy-2-naphthoate biosynthesis; 1,4-dihydroxy-2-naphthoate from chorismate: step 6/7.</text>
</comment>
<comment type="pathway">
    <text evidence="1">Quinol/quinone metabolism; menaquinone biosynthesis.</text>
</comment>
<comment type="similarity">
    <text evidence="1">Belongs to the enoyl-CoA hydratase/isomerase family. MenB subfamily.</text>
</comment>
<dbReference type="EC" id="4.1.3.36" evidence="1"/>
<dbReference type="EMBL" id="BA000033">
    <property type="protein sequence ID" value="BAB94794.1"/>
    <property type="molecule type" value="Genomic_DNA"/>
</dbReference>
<dbReference type="RefSeq" id="WP_000184953.1">
    <property type="nucleotide sequence ID" value="NC_003923.1"/>
</dbReference>
<dbReference type="SMR" id="Q8NXA0"/>
<dbReference type="KEGG" id="sam:MW0929"/>
<dbReference type="HOGENOM" id="CLU_009834_7_7_9"/>
<dbReference type="UniPathway" id="UPA00079"/>
<dbReference type="UniPathway" id="UPA01057">
    <property type="reaction ID" value="UER00167"/>
</dbReference>
<dbReference type="GO" id="GO:0005829">
    <property type="term" value="C:cytosol"/>
    <property type="evidence" value="ECO:0007669"/>
    <property type="project" value="TreeGrafter"/>
</dbReference>
<dbReference type="GO" id="GO:0008935">
    <property type="term" value="F:1,4-dihydroxy-2-naphthoyl-CoA synthase activity"/>
    <property type="evidence" value="ECO:0007669"/>
    <property type="project" value="UniProtKB-UniRule"/>
</dbReference>
<dbReference type="GO" id="GO:0009234">
    <property type="term" value="P:menaquinone biosynthetic process"/>
    <property type="evidence" value="ECO:0007669"/>
    <property type="project" value="UniProtKB-UniRule"/>
</dbReference>
<dbReference type="CDD" id="cd06558">
    <property type="entry name" value="crotonase-like"/>
    <property type="match status" value="1"/>
</dbReference>
<dbReference type="FunFam" id="1.10.12.10:FF:000003">
    <property type="entry name" value="1,4-dihydroxy-2-naphthoyl-CoA synthase"/>
    <property type="match status" value="1"/>
</dbReference>
<dbReference type="FunFam" id="3.90.226.10:FF:000003">
    <property type="entry name" value="1,4-dihydroxy-2-naphthoyl-CoA synthase"/>
    <property type="match status" value="1"/>
</dbReference>
<dbReference type="Gene3D" id="3.90.226.10">
    <property type="entry name" value="2-enoyl-CoA Hydratase, Chain A, domain 1"/>
    <property type="match status" value="1"/>
</dbReference>
<dbReference type="Gene3D" id="1.10.12.10">
    <property type="entry name" value="Lyase 2-enoyl-coa Hydratase, Chain A, domain 2"/>
    <property type="match status" value="1"/>
</dbReference>
<dbReference type="HAMAP" id="MF_01934">
    <property type="entry name" value="MenB"/>
    <property type="match status" value="1"/>
</dbReference>
<dbReference type="InterPro" id="IPR029045">
    <property type="entry name" value="ClpP/crotonase-like_dom_sf"/>
</dbReference>
<dbReference type="InterPro" id="IPR010198">
    <property type="entry name" value="DHNA-CoA_synthase_MenB"/>
</dbReference>
<dbReference type="InterPro" id="IPR001753">
    <property type="entry name" value="Enoyl-CoA_hydra/iso"/>
</dbReference>
<dbReference type="InterPro" id="IPR014748">
    <property type="entry name" value="Enoyl-CoA_hydra_C"/>
</dbReference>
<dbReference type="NCBIfam" id="TIGR01929">
    <property type="entry name" value="menB"/>
    <property type="match status" value="1"/>
</dbReference>
<dbReference type="NCBIfam" id="NF005637">
    <property type="entry name" value="PRK07396.1"/>
    <property type="match status" value="1"/>
</dbReference>
<dbReference type="PANTHER" id="PTHR43113:SF1">
    <property type="entry name" value="1,4-DIHYDROXY-2-NAPHTHOYL-COA SYNTHASE, PEROXISOMAL"/>
    <property type="match status" value="1"/>
</dbReference>
<dbReference type="PANTHER" id="PTHR43113">
    <property type="entry name" value="NUCLEOSIDE-DIPHOSPHATE-SUGAR EPIMERASE"/>
    <property type="match status" value="1"/>
</dbReference>
<dbReference type="Pfam" id="PF00378">
    <property type="entry name" value="ECH_1"/>
    <property type="match status" value="1"/>
</dbReference>
<dbReference type="SUPFAM" id="SSF52096">
    <property type="entry name" value="ClpP/crotonase"/>
    <property type="match status" value="1"/>
</dbReference>
<protein>
    <recommendedName>
        <fullName evidence="1">1,4-dihydroxy-2-naphthoyl-CoA synthase</fullName>
        <shortName evidence="1">DHNA-CoA synthase</shortName>
        <ecNumber evidence="1">4.1.3.36</ecNumber>
    </recommendedName>
</protein>
<name>MENB_STAAW</name>
<keyword id="KW-0456">Lyase</keyword>
<keyword id="KW-0474">Menaquinone biosynthesis</keyword>